<evidence type="ECO:0000255" key="1">
    <source>
        <dbReference type="HAMAP-Rule" id="MF_00361"/>
    </source>
</evidence>
<dbReference type="EC" id="2.7.1.23" evidence="1"/>
<dbReference type="EMBL" id="CP000607">
    <property type="protein sequence ID" value="ABP37703.1"/>
    <property type="molecule type" value="Genomic_DNA"/>
</dbReference>
<dbReference type="SMR" id="A4SGU4"/>
<dbReference type="STRING" id="290318.Cvib_1693"/>
<dbReference type="KEGG" id="pvi:Cvib_1693"/>
<dbReference type="eggNOG" id="COG0061">
    <property type="taxonomic scope" value="Bacteria"/>
</dbReference>
<dbReference type="HOGENOM" id="CLU_008831_0_3_10"/>
<dbReference type="OrthoDB" id="9774737at2"/>
<dbReference type="GO" id="GO:0005737">
    <property type="term" value="C:cytoplasm"/>
    <property type="evidence" value="ECO:0007669"/>
    <property type="project" value="UniProtKB-SubCell"/>
</dbReference>
<dbReference type="GO" id="GO:0005524">
    <property type="term" value="F:ATP binding"/>
    <property type="evidence" value="ECO:0007669"/>
    <property type="project" value="UniProtKB-KW"/>
</dbReference>
<dbReference type="GO" id="GO:0046872">
    <property type="term" value="F:metal ion binding"/>
    <property type="evidence" value="ECO:0007669"/>
    <property type="project" value="UniProtKB-UniRule"/>
</dbReference>
<dbReference type="GO" id="GO:0051287">
    <property type="term" value="F:NAD binding"/>
    <property type="evidence" value="ECO:0007669"/>
    <property type="project" value="UniProtKB-ARBA"/>
</dbReference>
<dbReference type="GO" id="GO:0003951">
    <property type="term" value="F:NAD+ kinase activity"/>
    <property type="evidence" value="ECO:0007669"/>
    <property type="project" value="UniProtKB-UniRule"/>
</dbReference>
<dbReference type="GO" id="GO:0019674">
    <property type="term" value="P:NAD metabolic process"/>
    <property type="evidence" value="ECO:0007669"/>
    <property type="project" value="InterPro"/>
</dbReference>
<dbReference type="GO" id="GO:0006741">
    <property type="term" value="P:NADP biosynthetic process"/>
    <property type="evidence" value="ECO:0007669"/>
    <property type="project" value="UniProtKB-UniRule"/>
</dbReference>
<dbReference type="Gene3D" id="3.40.50.10330">
    <property type="entry name" value="Probable inorganic polyphosphate/atp-NAD kinase, domain 1"/>
    <property type="match status" value="1"/>
</dbReference>
<dbReference type="Gene3D" id="2.60.200.30">
    <property type="entry name" value="Probable inorganic polyphosphate/atp-NAD kinase, domain 2"/>
    <property type="match status" value="1"/>
</dbReference>
<dbReference type="HAMAP" id="MF_00361">
    <property type="entry name" value="NAD_kinase"/>
    <property type="match status" value="1"/>
</dbReference>
<dbReference type="InterPro" id="IPR017438">
    <property type="entry name" value="ATP-NAD_kinase_N"/>
</dbReference>
<dbReference type="InterPro" id="IPR017437">
    <property type="entry name" value="ATP-NAD_kinase_PpnK-typ_C"/>
</dbReference>
<dbReference type="InterPro" id="IPR016064">
    <property type="entry name" value="NAD/diacylglycerol_kinase_sf"/>
</dbReference>
<dbReference type="InterPro" id="IPR002504">
    <property type="entry name" value="NADK"/>
</dbReference>
<dbReference type="PANTHER" id="PTHR20275">
    <property type="entry name" value="NAD KINASE"/>
    <property type="match status" value="1"/>
</dbReference>
<dbReference type="PANTHER" id="PTHR20275:SF0">
    <property type="entry name" value="NAD KINASE"/>
    <property type="match status" value="1"/>
</dbReference>
<dbReference type="Pfam" id="PF01513">
    <property type="entry name" value="NAD_kinase"/>
    <property type="match status" value="1"/>
</dbReference>
<dbReference type="Pfam" id="PF20143">
    <property type="entry name" value="NAD_kinase_C"/>
    <property type="match status" value="1"/>
</dbReference>
<dbReference type="SUPFAM" id="SSF111331">
    <property type="entry name" value="NAD kinase/diacylglycerol kinase-like"/>
    <property type="match status" value="1"/>
</dbReference>
<gene>
    <name evidence="1" type="primary">nadK</name>
    <name type="ordered locus">Cvib_1693</name>
</gene>
<protein>
    <recommendedName>
        <fullName evidence="1">NAD kinase</fullName>
        <ecNumber evidence="1">2.7.1.23</ecNumber>
    </recommendedName>
    <alternativeName>
        <fullName evidence="1">ATP-dependent NAD kinase</fullName>
    </alternativeName>
</protein>
<feature type="chain" id="PRO_1000079505" description="NAD kinase">
    <location>
        <begin position="1"/>
        <end position="281"/>
    </location>
</feature>
<feature type="active site" description="Proton acceptor" evidence="1">
    <location>
        <position position="66"/>
    </location>
</feature>
<feature type="binding site" evidence="1">
    <location>
        <begin position="66"/>
        <end position="67"/>
    </location>
    <ligand>
        <name>NAD(+)</name>
        <dbReference type="ChEBI" id="CHEBI:57540"/>
    </ligand>
</feature>
<feature type="binding site" evidence="1">
    <location>
        <begin position="137"/>
        <end position="138"/>
    </location>
    <ligand>
        <name>NAD(+)</name>
        <dbReference type="ChEBI" id="CHEBI:57540"/>
    </ligand>
</feature>
<feature type="binding site" evidence="1">
    <location>
        <position position="148"/>
    </location>
    <ligand>
        <name>NAD(+)</name>
        <dbReference type="ChEBI" id="CHEBI:57540"/>
    </ligand>
</feature>
<feature type="binding site" evidence="1">
    <location>
        <position position="165"/>
    </location>
    <ligand>
        <name>NAD(+)</name>
        <dbReference type="ChEBI" id="CHEBI:57540"/>
    </ligand>
</feature>
<feature type="binding site" evidence="1">
    <location>
        <position position="167"/>
    </location>
    <ligand>
        <name>NAD(+)</name>
        <dbReference type="ChEBI" id="CHEBI:57540"/>
    </ligand>
</feature>
<feature type="binding site" evidence="1">
    <location>
        <begin position="178"/>
        <end position="183"/>
    </location>
    <ligand>
        <name>NAD(+)</name>
        <dbReference type="ChEBI" id="CHEBI:57540"/>
    </ligand>
</feature>
<reference key="1">
    <citation type="submission" date="2007-03" db="EMBL/GenBank/DDBJ databases">
        <title>Complete sequence of Prosthecochloris vibrioformis DSM 265.</title>
        <authorList>
            <consortium name="US DOE Joint Genome Institute"/>
            <person name="Copeland A."/>
            <person name="Lucas S."/>
            <person name="Lapidus A."/>
            <person name="Barry K."/>
            <person name="Detter J.C."/>
            <person name="Glavina del Rio T."/>
            <person name="Hammon N."/>
            <person name="Israni S."/>
            <person name="Pitluck S."/>
            <person name="Schmutz J."/>
            <person name="Larimer F."/>
            <person name="Land M."/>
            <person name="Hauser L."/>
            <person name="Mikhailova N."/>
            <person name="Li T."/>
            <person name="Overmann J."/>
            <person name="Schuster S.C."/>
            <person name="Bryant D.A."/>
            <person name="Richardson P."/>
        </authorList>
    </citation>
    <scope>NUCLEOTIDE SEQUENCE [LARGE SCALE GENOMIC DNA]</scope>
    <source>
        <strain>DSM 265 / 1930</strain>
    </source>
</reference>
<name>NADK_CHLPM</name>
<proteinExistence type="inferred from homology"/>
<sequence>MSLGIVVNVSRQSAIDLARRLARWLDERKVDYVFESLSAEKTGSHRSAPIEELNTQCDAFISLGGDGTLLFTSQHSVTKPVIGVNVGRLGFLAEFSPEEMLPAVERFLNGDYSIHTRSQLEAGLLTNGSPEHFRALNDVVIEKGTYPRIPAFIIKLDGELLSSYRADGIIIATSTGSTAYSMSAGGPIIAPKSSVVVITPICPHMLTVRPIVISDEKSIEVSVDAPDGAFPLNCDGHLRKMLAPQEVVTIKKSSQSINLVANSSRDYCEVLRTKLLWGREA</sequence>
<keyword id="KW-0067">ATP-binding</keyword>
<keyword id="KW-0963">Cytoplasm</keyword>
<keyword id="KW-0418">Kinase</keyword>
<keyword id="KW-0520">NAD</keyword>
<keyword id="KW-0521">NADP</keyword>
<keyword id="KW-0547">Nucleotide-binding</keyword>
<keyword id="KW-0808">Transferase</keyword>
<accession>A4SGU4</accession>
<organism>
    <name type="scientific">Chlorobium phaeovibrioides (strain DSM 265 / 1930)</name>
    <name type="common">Prosthecochloris vibrioformis (strain DSM 265)</name>
    <dbReference type="NCBI Taxonomy" id="290318"/>
    <lineage>
        <taxon>Bacteria</taxon>
        <taxon>Pseudomonadati</taxon>
        <taxon>Chlorobiota</taxon>
        <taxon>Chlorobiia</taxon>
        <taxon>Chlorobiales</taxon>
        <taxon>Chlorobiaceae</taxon>
        <taxon>Chlorobium/Pelodictyon group</taxon>
        <taxon>Chlorobium</taxon>
    </lineage>
</organism>
<comment type="function">
    <text evidence="1">Involved in the regulation of the intracellular balance of NAD and NADP, and is a key enzyme in the biosynthesis of NADP. Catalyzes specifically the phosphorylation on 2'-hydroxyl of the adenosine moiety of NAD to yield NADP.</text>
</comment>
<comment type="catalytic activity">
    <reaction evidence="1">
        <text>NAD(+) + ATP = ADP + NADP(+) + H(+)</text>
        <dbReference type="Rhea" id="RHEA:18629"/>
        <dbReference type="ChEBI" id="CHEBI:15378"/>
        <dbReference type="ChEBI" id="CHEBI:30616"/>
        <dbReference type="ChEBI" id="CHEBI:57540"/>
        <dbReference type="ChEBI" id="CHEBI:58349"/>
        <dbReference type="ChEBI" id="CHEBI:456216"/>
        <dbReference type="EC" id="2.7.1.23"/>
    </reaction>
</comment>
<comment type="cofactor">
    <cofactor evidence="1">
        <name>a divalent metal cation</name>
        <dbReference type="ChEBI" id="CHEBI:60240"/>
    </cofactor>
</comment>
<comment type="subcellular location">
    <subcellularLocation>
        <location evidence="1">Cytoplasm</location>
    </subcellularLocation>
</comment>
<comment type="similarity">
    <text evidence="1">Belongs to the NAD kinase family.</text>
</comment>